<accession>P81059</accession>
<keyword id="KW-0027">Amidation</keyword>
<keyword id="KW-0044">Antibiotic</keyword>
<keyword id="KW-0929">Antimicrobial</keyword>
<keyword id="KW-0147">Chitin-binding</keyword>
<keyword id="KW-1015">Disulfide bond</keyword>
<keyword id="KW-0295">Fungicide</keyword>
<keyword id="KW-0873">Pyrrolidone carboxylic acid</keyword>
<keyword id="KW-0732">Signal</keyword>
<evidence type="ECO:0000250" key="1"/>
<evidence type="ECO:0000255" key="2"/>
<evidence type="ECO:0000269" key="3">
    <source>
    </source>
</evidence>
<evidence type="ECO:0000305" key="4"/>
<organism>
    <name type="scientific">Penaeus vannamei</name>
    <name type="common">Whiteleg shrimp</name>
    <name type="synonym">Litopenaeus vannamei</name>
    <dbReference type="NCBI Taxonomy" id="6689"/>
    <lineage>
        <taxon>Eukaryota</taxon>
        <taxon>Metazoa</taxon>
        <taxon>Ecdysozoa</taxon>
        <taxon>Arthropoda</taxon>
        <taxon>Crustacea</taxon>
        <taxon>Multicrustacea</taxon>
        <taxon>Malacostraca</taxon>
        <taxon>Eumalacostraca</taxon>
        <taxon>Eucarida</taxon>
        <taxon>Decapoda</taxon>
        <taxon>Dendrobranchiata</taxon>
        <taxon>Penaeoidea</taxon>
        <taxon>Penaeidae</taxon>
        <taxon>Penaeus</taxon>
    </lineage>
</organism>
<proteinExistence type="evidence at protein level"/>
<sequence>MRLVVCLVFLASFALVCQGQVYKGGYTRPVPRPPPFVRPLPGGPIGPYNGCPVSCRGISFSQARSCCSRLGRCCHVGKGYSG</sequence>
<comment type="function">
    <text>Antibacterial activity against M.luteus and E.coli bacteria. Antifungal activity against N.crassa and F.oxysporum. Presents chitin-binding activity.</text>
</comment>
<comment type="subcellular location">
    <subcellularLocation>
        <location evidence="3">Cytoplasmic granule</location>
    </subcellularLocation>
    <text>Cytoplasmic granules of hemocytes and to a lesser extent in small granules of hemocytes.</text>
</comment>
<comment type="tissue specificity">
    <text evidence="3">Higher expression in hemocytes and to a lesser extent in heart, testis, gills, intestine, lymphoid organ and hepatopancreas. Traces in eyes and subcuticular epithelium. Not present in the brain.</text>
</comment>
<comment type="developmental stage">
    <text evidence="3">Expression decreases 3 hours after microbial challenge to return to control levels after 12 hours and slightly increases after 24 hours.</text>
</comment>
<comment type="similarity">
    <text evidence="4">Belongs to the penaeidin family.</text>
</comment>
<dbReference type="EMBL" id="Y14927">
    <property type="protein sequence ID" value="CAA75144.1"/>
    <property type="molecule type" value="mRNA"/>
</dbReference>
<dbReference type="RefSeq" id="XP_027216280.2">
    <property type="nucleotide sequence ID" value="XM_027360479.2"/>
</dbReference>
<dbReference type="SMR" id="P81059"/>
<dbReference type="GeneID" id="113808997"/>
<dbReference type="GO" id="GO:0005737">
    <property type="term" value="C:cytoplasm"/>
    <property type="evidence" value="ECO:0007669"/>
    <property type="project" value="InterPro"/>
</dbReference>
<dbReference type="GO" id="GO:0008061">
    <property type="term" value="F:chitin binding"/>
    <property type="evidence" value="ECO:0007669"/>
    <property type="project" value="UniProtKB-KW"/>
</dbReference>
<dbReference type="GO" id="GO:0042742">
    <property type="term" value="P:defense response to bacterium"/>
    <property type="evidence" value="ECO:0007669"/>
    <property type="project" value="UniProtKB-KW"/>
</dbReference>
<dbReference type="GO" id="GO:0050832">
    <property type="term" value="P:defense response to fungus"/>
    <property type="evidence" value="ECO:0007669"/>
    <property type="project" value="UniProtKB-KW"/>
</dbReference>
<dbReference type="GO" id="GO:0031640">
    <property type="term" value="P:killing of cells of another organism"/>
    <property type="evidence" value="ECO:0007669"/>
    <property type="project" value="UniProtKB-KW"/>
</dbReference>
<dbReference type="InterPro" id="IPR009226">
    <property type="entry name" value="Penaeidin"/>
</dbReference>
<dbReference type="Pfam" id="PF05927">
    <property type="entry name" value="Penaeidin"/>
    <property type="match status" value="1"/>
</dbReference>
<protein>
    <recommendedName>
        <fullName>Penaeidin-3b</fullName>
        <shortName>P3-b</shortName>
        <shortName>Pen-3b</shortName>
    </recommendedName>
</protein>
<feature type="signal peptide" evidence="2">
    <location>
        <begin position="1"/>
        <end position="19"/>
    </location>
</feature>
<feature type="chain" id="PRO_0000023507" description="Penaeidin-3b">
    <location>
        <begin position="20"/>
        <end position="81"/>
    </location>
</feature>
<feature type="modified residue" description="Pyrrolidone carboxylic acid" evidence="1">
    <location>
        <position position="20"/>
    </location>
</feature>
<feature type="modified residue" description="Serine amide" evidence="1">
    <location>
        <position position="81"/>
    </location>
</feature>
<feature type="disulfide bond" evidence="1">
    <location>
        <begin position="51"/>
        <end position="66"/>
    </location>
</feature>
<feature type="disulfide bond" evidence="1">
    <location>
        <begin position="55"/>
        <end position="73"/>
    </location>
</feature>
<feature type="disulfide bond" evidence="1">
    <location>
        <begin position="67"/>
        <end position="74"/>
    </location>
</feature>
<reference key="1">
    <citation type="journal article" date="1997" name="J. Biol. Chem.">
        <title>Penaeidins, a new family of antimicrobial peptides isolated from the shrimp Penaeus vannamei (Decapoda).</title>
        <authorList>
            <person name="Destoumieux D."/>
            <person name="Bulet P."/>
            <person name="Loew D."/>
            <person name="van Dorsselaer A."/>
            <person name="Rodriguez J."/>
            <person name="Bachere E."/>
        </authorList>
    </citation>
    <scope>NUCLEOTIDE SEQUENCE [MRNA]</scope>
    <source>
        <tissue>Hemocyte</tissue>
    </source>
</reference>
<reference key="2">
    <citation type="journal article" date="2000" name="J. Cell Sci.">
        <title>Penaeidins, antimicrobial peptides with chitin-binding activity, are produced and stored in shrimp granulocytes and released after microbial challenge.</title>
        <authorList>
            <person name="Destoumieux D."/>
            <person name="Munoz M."/>
            <person name="Cosseau C."/>
            <person name="Rodriguez J."/>
            <person name="Bulet P."/>
            <person name="Comps M."/>
            <person name="Bachere E."/>
        </authorList>
    </citation>
    <scope>CHITIN-BINDING PROPERTIES</scope>
    <scope>TISSUE SPECIFICITY</scope>
    <scope>SUBCELLULAR LOCATION</scope>
    <scope>DEVELOPMENTAL STAGE</scope>
    <source>
        <tissue>Hemocyte</tissue>
    </source>
</reference>
<reference key="3">
    <citation type="journal article" date="2000" name="Cell. Mol. Life Sci.">
        <title>Penaeidins, a family of antimicrobial peptides from penaeid shrimp (Crustacea, Decapoda).</title>
        <authorList>
            <person name="Destoumieux D."/>
            <person name="Munoz M."/>
            <person name="Bulet P."/>
            <person name="Bachere E."/>
        </authorList>
    </citation>
    <scope>REVIEW</scope>
</reference>
<name>PEN3B_PENVA</name>